<reference key="1">
    <citation type="journal article" date="2002" name="Mol. Microbiol.">
        <title>Genome sequence of Streptococcus agalactiae, a pathogen causing invasive neonatal disease.</title>
        <authorList>
            <person name="Glaser P."/>
            <person name="Rusniok C."/>
            <person name="Buchrieser C."/>
            <person name="Chevalier F."/>
            <person name="Frangeul L."/>
            <person name="Msadek T."/>
            <person name="Zouine M."/>
            <person name="Couve E."/>
            <person name="Lalioui L."/>
            <person name="Poyart C."/>
            <person name="Trieu-Cuot P."/>
            <person name="Kunst F."/>
        </authorList>
    </citation>
    <scope>NUCLEOTIDE SEQUENCE [LARGE SCALE GENOMIC DNA]</scope>
    <source>
        <strain>NEM316</strain>
    </source>
</reference>
<proteinExistence type="inferred from homology"/>
<feature type="chain" id="PRO_0000208116" description="Galactose-6-phosphate isomerase subunit LacA 1">
    <location>
        <begin position="1"/>
        <end position="141"/>
    </location>
</feature>
<comment type="catalytic activity">
    <reaction evidence="1">
        <text>aldehydo-D-galactose 6-phosphate = keto-D-tagatose 6-phosphate</text>
        <dbReference type="Rhea" id="RHEA:13033"/>
        <dbReference type="ChEBI" id="CHEBI:58255"/>
        <dbReference type="ChEBI" id="CHEBI:134283"/>
        <dbReference type="EC" id="5.3.1.26"/>
    </reaction>
</comment>
<comment type="pathway">
    <text evidence="1">Carbohydrate metabolism; D-galactose 6-phosphate degradation; D-tagatose 6-phosphate from D-galactose 6-phosphate: step 1/1.</text>
</comment>
<comment type="subunit">
    <text evidence="1">Heteromultimeric protein consisting of LacA and LacB.</text>
</comment>
<comment type="similarity">
    <text evidence="1">Belongs to the LacAB/RpiB family.</text>
</comment>
<protein>
    <recommendedName>
        <fullName evidence="1">Galactose-6-phosphate isomerase subunit LacA 1</fullName>
        <ecNumber evidence="1">5.3.1.26</ecNumber>
    </recommendedName>
</protein>
<dbReference type="EC" id="5.3.1.26" evidence="1"/>
<dbReference type="EMBL" id="AL766850">
    <property type="protein sequence ID" value="CAD46995.1"/>
    <property type="molecule type" value="Genomic_DNA"/>
</dbReference>
<dbReference type="SMR" id="Q8E4R5"/>
<dbReference type="KEGG" id="san:gbs1336"/>
<dbReference type="eggNOG" id="COG0698">
    <property type="taxonomic scope" value="Bacteria"/>
</dbReference>
<dbReference type="HOGENOM" id="CLU_091396_4_2_9"/>
<dbReference type="UniPathway" id="UPA00702">
    <property type="reaction ID" value="UER00714"/>
</dbReference>
<dbReference type="Proteomes" id="UP000000823">
    <property type="component" value="Chromosome"/>
</dbReference>
<dbReference type="GO" id="GO:0050044">
    <property type="term" value="F:galactose-6-phosphate isomerase activity"/>
    <property type="evidence" value="ECO:0007669"/>
    <property type="project" value="UniProtKB-UniRule"/>
</dbReference>
<dbReference type="GO" id="GO:0004751">
    <property type="term" value="F:ribose-5-phosphate isomerase activity"/>
    <property type="evidence" value="ECO:0007669"/>
    <property type="project" value="TreeGrafter"/>
</dbReference>
<dbReference type="GO" id="GO:0019316">
    <property type="term" value="P:D-allose catabolic process"/>
    <property type="evidence" value="ECO:0007669"/>
    <property type="project" value="TreeGrafter"/>
</dbReference>
<dbReference type="GO" id="GO:0019388">
    <property type="term" value="P:galactose catabolic process"/>
    <property type="evidence" value="ECO:0007669"/>
    <property type="project" value="UniProtKB-UniPathway"/>
</dbReference>
<dbReference type="GO" id="GO:0019512">
    <property type="term" value="P:lactose catabolic process via tagatose-6-phosphate"/>
    <property type="evidence" value="ECO:0007669"/>
    <property type="project" value="UniProtKB-UniRule"/>
</dbReference>
<dbReference type="GO" id="GO:0009052">
    <property type="term" value="P:pentose-phosphate shunt, non-oxidative branch"/>
    <property type="evidence" value="ECO:0007669"/>
    <property type="project" value="TreeGrafter"/>
</dbReference>
<dbReference type="Gene3D" id="3.40.1400.10">
    <property type="entry name" value="Sugar-phosphate isomerase, RpiB/LacA/LacB"/>
    <property type="match status" value="1"/>
</dbReference>
<dbReference type="HAMAP" id="MF_01555">
    <property type="entry name" value="LacA"/>
    <property type="match status" value="1"/>
</dbReference>
<dbReference type="InterPro" id="IPR004783">
    <property type="entry name" value="LacA"/>
</dbReference>
<dbReference type="InterPro" id="IPR003500">
    <property type="entry name" value="RpiB_LacA_LacB"/>
</dbReference>
<dbReference type="InterPro" id="IPR036569">
    <property type="entry name" value="RpiB_LacA_LacB_sf"/>
</dbReference>
<dbReference type="NCBIfam" id="TIGR01118">
    <property type="entry name" value="lacA"/>
    <property type="match status" value="1"/>
</dbReference>
<dbReference type="NCBIfam" id="NF006380">
    <property type="entry name" value="PRK08621.1"/>
    <property type="match status" value="1"/>
</dbReference>
<dbReference type="NCBIfam" id="NF009257">
    <property type="entry name" value="PRK12613.1"/>
    <property type="match status" value="1"/>
</dbReference>
<dbReference type="NCBIfam" id="TIGR00689">
    <property type="entry name" value="rpiB_lacA_lacB"/>
    <property type="match status" value="1"/>
</dbReference>
<dbReference type="PANTHER" id="PTHR30345:SF5">
    <property type="entry name" value="GALACTOSE-6-PHOSPHATE ISOMERASE SUBUNIT LACA"/>
    <property type="match status" value="1"/>
</dbReference>
<dbReference type="PANTHER" id="PTHR30345">
    <property type="entry name" value="RIBOSE-5-PHOSPHATE ISOMERASE B"/>
    <property type="match status" value="1"/>
</dbReference>
<dbReference type="Pfam" id="PF02502">
    <property type="entry name" value="LacAB_rpiB"/>
    <property type="match status" value="1"/>
</dbReference>
<dbReference type="PIRSF" id="PIRSF005384">
    <property type="entry name" value="RpiB_LacA_B"/>
    <property type="match status" value="1"/>
</dbReference>
<dbReference type="SUPFAM" id="SSF89623">
    <property type="entry name" value="Ribose/Galactose isomerase RpiB/AlsB"/>
    <property type="match status" value="1"/>
</dbReference>
<gene>
    <name evidence="1" type="primary">lacA1</name>
    <name type="ordered locus">gbs1336</name>
</gene>
<evidence type="ECO:0000255" key="1">
    <source>
        <dbReference type="HAMAP-Rule" id="MF_01555"/>
    </source>
</evidence>
<accession>Q8E4R5</accession>
<sequence>MAIIIGADTAGSKLKDVVKDFLVGENFEVVDVTQDGQDFVDVTLAVAAEVNKQEENLGIVIDAYGAGPFMVATKIKGMVAAEVSDERSAYMTRGHNNSRMITMGSEIVGEGLAKNIAKGFVNGKYDGGRHQIRVDMLNKMC</sequence>
<name>LACA1_STRA3</name>
<keyword id="KW-0413">Isomerase</keyword>
<keyword id="KW-0423">Lactose metabolism</keyword>
<organism>
    <name type="scientific">Streptococcus agalactiae serotype III (strain NEM316)</name>
    <dbReference type="NCBI Taxonomy" id="211110"/>
    <lineage>
        <taxon>Bacteria</taxon>
        <taxon>Bacillati</taxon>
        <taxon>Bacillota</taxon>
        <taxon>Bacilli</taxon>
        <taxon>Lactobacillales</taxon>
        <taxon>Streptococcaceae</taxon>
        <taxon>Streptococcus</taxon>
    </lineage>
</organism>